<name>TLP_CLOAB</name>
<keyword id="KW-1185">Reference proteome</keyword>
<organism>
    <name type="scientific">Clostridium acetobutylicum (strain ATCC 824 / DSM 792 / JCM 1419 / IAM 19013 / LMG 5710 / NBRC 13948 / NRRL B-527 / VKM B-1787 / 2291 / W)</name>
    <dbReference type="NCBI Taxonomy" id="272562"/>
    <lineage>
        <taxon>Bacteria</taxon>
        <taxon>Bacillati</taxon>
        <taxon>Bacillota</taxon>
        <taxon>Clostridia</taxon>
        <taxon>Eubacteriales</taxon>
        <taxon>Clostridiaceae</taxon>
        <taxon>Clostridium</taxon>
    </lineage>
</organism>
<dbReference type="EMBL" id="AE001437">
    <property type="protein sequence ID" value="AAK79455.1"/>
    <property type="molecule type" value="Genomic_DNA"/>
</dbReference>
<dbReference type="PIR" id="D97083">
    <property type="entry name" value="D97083"/>
</dbReference>
<dbReference type="RefSeq" id="NP_348115.1">
    <property type="nucleotide sequence ID" value="NC_003030.1"/>
</dbReference>
<dbReference type="RefSeq" id="WP_010964796.1">
    <property type="nucleotide sequence ID" value="NC_003030.1"/>
</dbReference>
<dbReference type="SMR" id="Q97IZ9"/>
<dbReference type="STRING" id="272562.CA_C1487"/>
<dbReference type="GeneID" id="44997989"/>
<dbReference type="KEGG" id="cac:CA_C1487"/>
<dbReference type="PATRIC" id="fig|272562.8.peg.1689"/>
<dbReference type="eggNOG" id="ENOG5032ZH6">
    <property type="taxonomic scope" value="Bacteria"/>
</dbReference>
<dbReference type="HOGENOM" id="CLU_178266_1_1_9"/>
<dbReference type="OrthoDB" id="1799076at2"/>
<dbReference type="Proteomes" id="UP000000814">
    <property type="component" value="Chromosome"/>
</dbReference>
<dbReference type="HAMAP" id="MF_01506">
    <property type="entry name" value="Tlp"/>
    <property type="match status" value="1"/>
</dbReference>
<dbReference type="InterPro" id="IPR017524">
    <property type="entry name" value="SASP_thioredoxin-like"/>
</dbReference>
<dbReference type="NCBIfam" id="TIGR03090">
    <property type="entry name" value="SASP_tlp"/>
    <property type="match status" value="1"/>
</dbReference>
<dbReference type="Pfam" id="PF19824">
    <property type="entry name" value="Tlp"/>
    <property type="match status" value="1"/>
</dbReference>
<proteinExistence type="inferred from homology"/>
<protein>
    <recommendedName>
        <fullName evidence="1">Protein Tlp homolog</fullName>
    </recommendedName>
</protein>
<sequence length="75" mass="8909">MKSKPDDRRDNVDRIQQSIDNTIENIHETNEMIENTNREKNKDDLKAKNCRREAALDEFKSEIKDEARAKEKGYK</sequence>
<comment type="similarity">
    <text evidence="1">Belongs to the Tlp family.</text>
</comment>
<gene>
    <name evidence="1" type="primary">tlp</name>
    <name type="ordered locus">CA_C1487</name>
</gene>
<feature type="chain" id="PRO_0000221503" description="Protein Tlp homolog">
    <location>
        <begin position="1"/>
        <end position="75"/>
    </location>
</feature>
<accession>Q97IZ9</accession>
<reference key="1">
    <citation type="journal article" date="2001" name="J. Bacteriol.">
        <title>Genome sequence and comparative analysis of the solvent-producing bacterium Clostridium acetobutylicum.</title>
        <authorList>
            <person name="Noelling J."/>
            <person name="Breton G."/>
            <person name="Omelchenko M.V."/>
            <person name="Makarova K.S."/>
            <person name="Zeng Q."/>
            <person name="Gibson R."/>
            <person name="Lee H.M."/>
            <person name="Dubois J."/>
            <person name="Qiu D."/>
            <person name="Hitti J."/>
            <person name="Wolf Y.I."/>
            <person name="Tatusov R.L."/>
            <person name="Sabathe F."/>
            <person name="Doucette-Stamm L.A."/>
            <person name="Soucaille P."/>
            <person name="Daly M.J."/>
            <person name="Bennett G.N."/>
            <person name="Koonin E.V."/>
            <person name="Smith D.R."/>
        </authorList>
    </citation>
    <scope>NUCLEOTIDE SEQUENCE [LARGE SCALE GENOMIC DNA]</scope>
    <source>
        <strain>ATCC 824 / DSM 792 / JCM 1419 / IAM 19013 / LMG 5710 / NBRC 13948 / NRRL B-527 / VKM B-1787 / 2291 / W</strain>
    </source>
</reference>
<evidence type="ECO:0000255" key="1">
    <source>
        <dbReference type="HAMAP-Rule" id="MF_01506"/>
    </source>
</evidence>